<keyword id="KW-0997">Cell inner membrane</keyword>
<keyword id="KW-1003">Cell membrane</keyword>
<keyword id="KW-0472">Membrane</keyword>
<keyword id="KW-1185">Reference proteome</keyword>
<keyword id="KW-0812">Transmembrane</keyword>
<keyword id="KW-1133">Transmembrane helix</keyword>
<protein>
    <recommendedName>
        <fullName evidence="1">UPF0761 membrane protein YihY</fullName>
    </recommendedName>
</protein>
<dbReference type="EMBL" id="CP001063">
    <property type="protein sequence ID" value="ACD09231.1"/>
    <property type="molecule type" value="Genomic_DNA"/>
</dbReference>
<dbReference type="RefSeq" id="WP_000920762.1">
    <property type="nucleotide sequence ID" value="NC_010658.1"/>
</dbReference>
<dbReference type="STRING" id="344609.SbBS512_E4364"/>
<dbReference type="KEGG" id="sbc:SbBS512_E4364"/>
<dbReference type="HOGENOM" id="CLU_032288_0_0_6"/>
<dbReference type="Proteomes" id="UP000001030">
    <property type="component" value="Chromosome"/>
</dbReference>
<dbReference type="GO" id="GO:0005886">
    <property type="term" value="C:plasma membrane"/>
    <property type="evidence" value="ECO:0007669"/>
    <property type="project" value="UniProtKB-SubCell"/>
</dbReference>
<dbReference type="HAMAP" id="MF_00672">
    <property type="entry name" value="UPF0761"/>
    <property type="match status" value="1"/>
</dbReference>
<dbReference type="InterPro" id="IPR023679">
    <property type="entry name" value="UPF0761_bac"/>
</dbReference>
<dbReference type="InterPro" id="IPR017039">
    <property type="entry name" value="Virul_fac_BrkB"/>
</dbReference>
<dbReference type="NCBIfam" id="NF002457">
    <property type="entry name" value="PRK01637.1"/>
    <property type="match status" value="1"/>
</dbReference>
<dbReference type="NCBIfam" id="TIGR00765">
    <property type="entry name" value="yihY_not_rbn"/>
    <property type="match status" value="1"/>
</dbReference>
<dbReference type="PANTHER" id="PTHR30213">
    <property type="entry name" value="INNER MEMBRANE PROTEIN YHJD"/>
    <property type="match status" value="1"/>
</dbReference>
<dbReference type="PANTHER" id="PTHR30213:SF0">
    <property type="entry name" value="UPF0761 MEMBRANE PROTEIN YIHY"/>
    <property type="match status" value="1"/>
</dbReference>
<dbReference type="Pfam" id="PF03631">
    <property type="entry name" value="Virul_fac_BrkB"/>
    <property type="match status" value="1"/>
</dbReference>
<dbReference type="PIRSF" id="PIRSF035875">
    <property type="entry name" value="RNase_BN"/>
    <property type="match status" value="1"/>
</dbReference>
<sequence>MLKTIQDKARHRTRPLWAWLKLLWQRIDEDNMTTLAGNLAYVSLLSLVPLVAVVFALFAAFPMFSDVSIQLRHFIFANFLPATGDVIQRYIEQFVANSNKMTAVGACGLIVTALLLMYSIDSALNTIWRSKRARPKIYSFAVYWMILTLGPLLAGASLAISSYLLSLRWASDLNTVIDNVLRIFPLLLSWISFWLLYSIVPTIRVPNRDAIVGAFVAALLFEAGKKGFALYITMFPSYQLIYGVLAVIPILFVWVYWTWCIVLLGAEITVTLGEYRKLKQAAEQEEDDEP</sequence>
<comment type="subcellular location">
    <subcellularLocation>
        <location evidence="1">Cell inner membrane</location>
        <topology evidence="1">Multi-pass membrane protein</topology>
    </subcellularLocation>
</comment>
<comment type="similarity">
    <text evidence="1">Belongs to the UPF0761 family.</text>
</comment>
<evidence type="ECO:0000255" key="1">
    <source>
        <dbReference type="HAMAP-Rule" id="MF_00672"/>
    </source>
</evidence>
<name>YIHY_SHIB3</name>
<gene>
    <name evidence="1" type="primary">yihY</name>
    <name type="ordered locus">SbBS512_E4364</name>
</gene>
<feature type="chain" id="PRO_1000131567" description="UPF0761 membrane protein YihY">
    <location>
        <begin position="1"/>
        <end position="290"/>
    </location>
</feature>
<feature type="transmembrane region" description="Helical" evidence="1">
    <location>
        <begin position="44"/>
        <end position="64"/>
    </location>
</feature>
<feature type="transmembrane region" description="Helical" evidence="1">
    <location>
        <begin position="104"/>
        <end position="124"/>
    </location>
</feature>
<feature type="transmembrane region" description="Helical" evidence="1">
    <location>
        <begin position="140"/>
        <end position="160"/>
    </location>
</feature>
<feature type="transmembrane region" description="Helical" evidence="1">
    <location>
        <begin position="183"/>
        <end position="203"/>
    </location>
</feature>
<feature type="transmembrane region" description="Helical" evidence="1">
    <location>
        <begin position="210"/>
        <end position="230"/>
    </location>
</feature>
<feature type="transmembrane region" description="Helical" evidence="1">
    <location>
        <begin position="244"/>
        <end position="264"/>
    </location>
</feature>
<organism>
    <name type="scientific">Shigella boydii serotype 18 (strain CDC 3083-94 / BS512)</name>
    <dbReference type="NCBI Taxonomy" id="344609"/>
    <lineage>
        <taxon>Bacteria</taxon>
        <taxon>Pseudomonadati</taxon>
        <taxon>Pseudomonadota</taxon>
        <taxon>Gammaproteobacteria</taxon>
        <taxon>Enterobacterales</taxon>
        <taxon>Enterobacteriaceae</taxon>
        <taxon>Shigella</taxon>
    </lineage>
</organism>
<accession>B2TVN0</accession>
<proteinExistence type="inferred from homology"/>
<reference key="1">
    <citation type="submission" date="2008-05" db="EMBL/GenBank/DDBJ databases">
        <title>Complete sequence of Shigella boydii serotype 18 strain BS512.</title>
        <authorList>
            <person name="Rasko D.A."/>
            <person name="Rosovitz M."/>
            <person name="Maurelli A.T."/>
            <person name="Myers G."/>
            <person name="Seshadri R."/>
            <person name="Cer R."/>
            <person name="Jiang L."/>
            <person name="Ravel J."/>
            <person name="Sebastian Y."/>
        </authorList>
    </citation>
    <scope>NUCLEOTIDE SEQUENCE [LARGE SCALE GENOMIC DNA]</scope>
    <source>
        <strain>CDC 3083-94 / BS512</strain>
    </source>
</reference>